<proteinExistence type="inferred from homology"/>
<keyword id="KW-0067">ATP-binding</keyword>
<keyword id="KW-0418">Kinase</keyword>
<keyword id="KW-0460">Magnesium</keyword>
<keyword id="KW-0479">Metal-binding</keyword>
<keyword id="KW-0547">Nucleotide-binding</keyword>
<keyword id="KW-0784">Thiamine biosynthesis</keyword>
<keyword id="KW-0808">Transferase</keyword>
<sequence>MLMQSIYLSKIREQNPLIHNITNIVAANFSANGLLALGASPLMSANIEEMQEVPKISQVLVINIGTLIGKDREAMLQAGKTANEVGIPVVLDPVGVGATSYRRETIRQLLAEVKFALIRGNAGELAAIAGETWQAKGVDAGQGEVDLKAVAEKVAQRYGCTVLISGAVDIVSDGTQTATVHNGTSLFPKVTASGCLLSAVCAAFLAVSEGNYFSATLEACVAYTIAGECAAQGLTTQVGQFQIRLLDELAALSPETIGQRGRINE</sequence>
<organism>
    <name type="scientific">Haemophilus influenzae (strain 86-028NP)</name>
    <dbReference type="NCBI Taxonomy" id="281310"/>
    <lineage>
        <taxon>Bacteria</taxon>
        <taxon>Pseudomonadati</taxon>
        <taxon>Pseudomonadota</taxon>
        <taxon>Gammaproteobacteria</taxon>
        <taxon>Pasteurellales</taxon>
        <taxon>Pasteurellaceae</taxon>
        <taxon>Haemophilus</taxon>
    </lineage>
</organism>
<accession>Q4QNC8</accession>
<gene>
    <name evidence="1" type="primary">thiM</name>
    <name type="ordered locus">NTHI0540</name>
</gene>
<comment type="function">
    <text evidence="1">Catalyzes the phosphorylation of the hydroxyl group of 4-methyl-5-beta-hydroxyethylthiazole (THZ).</text>
</comment>
<comment type="catalytic activity">
    <reaction evidence="1">
        <text>5-(2-hydroxyethyl)-4-methylthiazole + ATP = 4-methyl-5-(2-phosphooxyethyl)-thiazole + ADP + H(+)</text>
        <dbReference type="Rhea" id="RHEA:24212"/>
        <dbReference type="ChEBI" id="CHEBI:15378"/>
        <dbReference type="ChEBI" id="CHEBI:17957"/>
        <dbReference type="ChEBI" id="CHEBI:30616"/>
        <dbReference type="ChEBI" id="CHEBI:58296"/>
        <dbReference type="ChEBI" id="CHEBI:456216"/>
        <dbReference type="EC" id="2.7.1.50"/>
    </reaction>
</comment>
<comment type="cofactor">
    <cofactor evidence="1">
        <name>Mg(2+)</name>
        <dbReference type="ChEBI" id="CHEBI:18420"/>
    </cofactor>
</comment>
<comment type="pathway">
    <text evidence="1">Cofactor biosynthesis; thiamine diphosphate biosynthesis; 4-methyl-5-(2-phosphoethyl)-thiazole from 5-(2-hydroxyethyl)-4-methylthiazole: step 1/1.</text>
</comment>
<comment type="similarity">
    <text evidence="1">Belongs to the Thz kinase family.</text>
</comment>
<name>THIM_HAEI8</name>
<evidence type="ECO:0000255" key="1">
    <source>
        <dbReference type="HAMAP-Rule" id="MF_00228"/>
    </source>
</evidence>
<dbReference type="EC" id="2.7.1.50" evidence="1"/>
<dbReference type="EMBL" id="CP000057">
    <property type="protein sequence ID" value="AAX87469.1"/>
    <property type="molecule type" value="Genomic_DNA"/>
</dbReference>
<dbReference type="SMR" id="Q4QNC8"/>
<dbReference type="KEGG" id="hit:NTHI0540"/>
<dbReference type="HOGENOM" id="CLU_019943_0_0_6"/>
<dbReference type="UniPathway" id="UPA00060">
    <property type="reaction ID" value="UER00139"/>
</dbReference>
<dbReference type="Proteomes" id="UP000002525">
    <property type="component" value="Chromosome"/>
</dbReference>
<dbReference type="GO" id="GO:0005524">
    <property type="term" value="F:ATP binding"/>
    <property type="evidence" value="ECO:0007669"/>
    <property type="project" value="UniProtKB-UniRule"/>
</dbReference>
<dbReference type="GO" id="GO:0004417">
    <property type="term" value="F:hydroxyethylthiazole kinase activity"/>
    <property type="evidence" value="ECO:0007669"/>
    <property type="project" value="UniProtKB-UniRule"/>
</dbReference>
<dbReference type="GO" id="GO:0000287">
    <property type="term" value="F:magnesium ion binding"/>
    <property type="evidence" value="ECO:0007669"/>
    <property type="project" value="UniProtKB-UniRule"/>
</dbReference>
<dbReference type="GO" id="GO:0009228">
    <property type="term" value="P:thiamine biosynthetic process"/>
    <property type="evidence" value="ECO:0007669"/>
    <property type="project" value="UniProtKB-KW"/>
</dbReference>
<dbReference type="GO" id="GO:0009229">
    <property type="term" value="P:thiamine diphosphate biosynthetic process"/>
    <property type="evidence" value="ECO:0007669"/>
    <property type="project" value="UniProtKB-UniRule"/>
</dbReference>
<dbReference type="CDD" id="cd01170">
    <property type="entry name" value="THZ_kinase"/>
    <property type="match status" value="1"/>
</dbReference>
<dbReference type="Gene3D" id="3.40.1190.20">
    <property type="match status" value="1"/>
</dbReference>
<dbReference type="HAMAP" id="MF_00228">
    <property type="entry name" value="Thz_kinase"/>
    <property type="match status" value="1"/>
</dbReference>
<dbReference type="InterPro" id="IPR000417">
    <property type="entry name" value="Hyethyz_kinase"/>
</dbReference>
<dbReference type="InterPro" id="IPR029056">
    <property type="entry name" value="Ribokinase-like"/>
</dbReference>
<dbReference type="NCBIfam" id="NF006830">
    <property type="entry name" value="PRK09355.1"/>
    <property type="match status" value="1"/>
</dbReference>
<dbReference type="NCBIfam" id="TIGR00694">
    <property type="entry name" value="thiM"/>
    <property type="match status" value="1"/>
</dbReference>
<dbReference type="Pfam" id="PF02110">
    <property type="entry name" value="HK"/>
    <property type="match status" value="1"/>
</dbReference>
<dbReference type="PIRSF" id="PIRSF000513">
    <property type="entry name" value="Thz_kinase"/>
    <property type="match status" value="1"/>
</dbReference>
<dbReference type="PRINTS" id="PR01099">
    <property type="entry name" value="HYETHTZKNASE"/>
</dbReference>
<dbReference type="SUPFAM" id="SSF53613">
    <property type="entry name" value="Ribokinase-like"/>
    <property type="match status" value="1"/>
</dbReference>
<protein>
    <recommendedName>
        <fullName evidence="1">Hydroxyethylthiazole kinase</fullName>
        <ecNumber evidence="1">2.7.1.50</ecNumber>
    </recommendedName>
    <alternativeName>
        <fullName evidence="1">4-methyl-5-beta-hydroxyethylthiazole kinase</fullName>
        <shortName evidence="1">TH kinase</shortName>
        <shortName evidence="1">Thz kinase</shortName>
    </alternativeName>
</protein>
<feature type="chain" id="PRO_1000021513" description="Hydroxyethylthiazole kinase">
    <location>
        <begin position="1"/>
        <end position="265"/>
    </location>
</feature>
<feature type="binding site" evidence="1">
    <location>
        <position position="43"/>
    </location>
    <ligand>
        <name>substrate</name>
    </ligand>
</feature>
<feature type="binding site" evidence="1">
    <location>
        <position position="119"/>
    </location>
    <ligand>
        <name>ATP</name>
        <dbReference type="ChEBI" id="CHEBI:30616"/>
    </ligand>
</feature>
<feature type="binding site" evidence="1">
    <location>
        <position position="165"/>
    </location>
    <ligand>
        <name>ATP</name>
        <dbReference type="ChEBI" id="CHEBI:30616"/>
    </ligand>
</feature>
<feature type="binding site" evidence="1">
    <location>
        <position position="192"/>
    </location>
    <ligand>
        <name>substrate</name>
    </ligand>
</feature>
<reference key="1">
    <citation type="journal article" date="2005" name="J. Bacteriol.">
        <title>Genomic sequence of an otitis media isolate of nontypeable Haemophilus influenzae: comparative study with H. influenzae serotype d, strain KW20.</title>
        <authorList>
            <person name="Harrison A."/>
            <person name="Dyer D.W."/>
            <person name="Gillaspy A."/>
            <person name="Ray W.C."/>
            <person name="Mungur R."/>
            <person name="Carson M.B."/>
            <person name="Zhong H."/>
            <person name="Gipson J."/>
            <person name="Gipson M."/>
            <person name="Johnson L.S."/>
            <person name="Lewis L."/>
            <person name="Bakaletz L.O."/>
            <person name="Munson R.S. Jr."/>
        </authorList>
    </citation>
    <scope>NUCLEOTIDE SEQUENCE [LARGE SCALE GENOMIC DNA]</scope>
    <source>
        <strain>86-028NP</strain>
    </source>
</reference>